<dbReference type="EMBL" id="CP000526">
    <property type="protein sequence ID" value="ABM51342.1"/>
    <property type="molecule type" value="Genomic_DNA"/>
</dbReference>
<dbReference type="RefSeq" id="WP_004196764.1">
    <property type="nucleotide sequence ID" value="NC_008785.1"/>
</dbReference>
<dbReference type="SMR" id="A1V8C9"/>
<dbReference type="GeneID" id="93061793"/>
<dbReference type="KEGG" id="bmv:BMASAVP1_A3199"/>
<dbReference type="HOGENOM" id="CLU_080880_3_0_4"/>
<dbReference type="GO" id="GO:0005829">
    <property type="term" value="C:cytosol"/>
    <property type="evidence" value="ECO:0007669"/>
    <property type="project" value="TreeGrafter"/>
</dbReference>
<dbReference type="GO" id="GO:0008199">
    <property type="term" value="F:ferric iron binding"/>
    <property type="evidence" value="ECO:0007669"/>
    <property type="project" value="InterPro"/>
</dbReference>
<dbReference type="GO" id="GO:0008198">
    <property type="term" value="F:ferrous iron binding"/>
    <property type="evidence" value="ECO:0007669"/>
    <property type="project" value="TreeGrafter"/>
</dbReference>
<dbReference type="GO" id="GO:0016226">
    <property type="term" value="P:iron-sulfur cluster assembly"/>
    <property type="evidence" value="ECO:0007669"/>
    <property type="project" value="UniProtKB-UniRule"/>
</dbReference>
<dbReference type="CDD" id="cd00503">
    <property type="entry name" value="Frataxin"/>
    <property type="match status" value="1"/>
</dbReference>
<dbReference type="Gene3D" id="3.30.920.10">
    <property type="entry name" value="Frataxin/CyaY"/>
    <property type="match status" value="1"/>
</dbReference>
<dbReference type="HAMAP" id="MF_00142">
    <property type="entry name" value="CyaY"/>
    <property type="match status" value="1"/>
</dbReference>
<dbReference type="InterPro" id="IPR047584">
    <property type="entry name" value="CyaY"/>
</dbReference>
<dbReference type="InterPro" id="IPR002908">
    <property type="entry name" value="Frataxin/CyaY"/>
</dbReference>
<dbReference type="InterPro" id="IPR036524">
    <property type="entry name" value="Frataxin/CyaY_sf"/>
</dbReference>
<dbReference type="InterPro" id="IPR020895">
    <property type="entry name" value="Frataxin_CS"/>
</dbReference>
<dbReference type="NCBIfam" id="TIGR03421">
    <property type="entry name" value="FeS_CyaY"/>
    <property type="match status" value="1"/>
</dbReference>
<dbReference type="PANTHER" id="PTHR16821">
    <property type="entry name" value="FRATAXIN"/>
    <property type="match status" value="1"/>
</dbReference>
<dbReference type="PANTHER" id="PTHR16821:SF2">
    <property type="entry name" value="FRATAXIN, MITOCHONDRIAL"/>
    <property type="match status" value="1"/>
</dbReference>
<dbReference type="Pfam" id="PF01491">
    <property type="entry name" value="Frataxin_Cyay"/>
    <property type="match status" value="1"/>
</dbReference>
<dbReference type="SMART" id="SM01219">
    <property type="entry name" value="Frataxin_Cyay"/>
    <property type="match status" value="1"/>
</dbReference>
<dbReference type="SUPFAM" id="SSF55387">
    <property type="entry name" value="Frataxin/Nqo15-like"/>
    <property type="match status" value="1"/>
</dbReference>
<dbReference type="PROSITE" id="PS01344">
    <property type="entry name" value="FRATAXIN_1"/>
    <property type="match status" value="1"/>
</dbReference>
<dbReference type="PROSITE" id="PS50810">
    <property type="entry name" value="FRATAXIN_2"/>
    <property type="match status" value="1"/>
</dbReference>
<evidence type="ECO:0000255" key="1">
    <source>
        <dbReference type="HAMAP-Rule" id="MF_00142"/>
    </source>
</evidence>
<keyword id="KW-0408">Iron</keyword>
<keyword id="KW-0479">Metal-binding</keyword>
<sequence length="108" mass="11677">MSDTDYLTRAEAVLAAVERSVDAANDGDADIDLERNGSVLTLTFENGSKIIVNLQPPMKEVWIAAKAGGFHYRFVDGAWRDTRSGDEFFAALTGYATQQAGMPIAFSA</sequence>
<name>CYAY_BURMS</name>
<accession>A1V8C9</accession>
<protein>
    <recommendedName>
        <fullName evidence="1">Iron-sulfur cluster assembly protein CyaY</fullName>
    </recommendedName>
</protein>
<comment type="function">
    <text evidence="1">Involved in iron-sulfur (Fe-S) cluster assembly. May act as a regulator of Fe-S biogenesis.</text>
</comment>
<comment type="similarity">
    <text evidence="1">Belongs to the frataxin family.</text>
</comment>
<feature type="chain" id="PRO_1000010917" description="Iron-sulfur cluster assembly protein CyaY">
    <location>
        <begin position="1"/>
        <end position="108"/>
    </location>
</feature>
<gene>
    <name evidence="1" type="primary">cyaY</name>
    <name type="ordered locus">BMASAVP1_A3199</name>
</gene>
<proteinExistence type="inferred from homology"/>
<organism>
    <name type="scientific">Burkholderia mallei (strain SAVP1)</name>
    <dbReference type="NCBI Taxonomy" id="320388"/>
    <lineage>
        <taxon>Bacteria</taxon>
        <taxon>Pseudomonadati</taxon>
        <taxon>Pseudomonadota</taxon>
        <taxon>Betaproteobacteria</taxon>
        <taxon>Burkholderiales</taxon>
        <taxon>Burkholderiaceae</taxon>
        <taxon>Burkholderia</taxon>
        <taxon>pseudomallei group</taxon>
    </lineage>
</organism>
<reference key="1">
    <citation type="journal article" date="2010" name="Genome Biol. Evol.">
        <title>Continuing evolution of Burkholderia mallei through genome reduction and large-scale rearrangements.</title>
        <authorList>
            <person name="Losada L."/>
            <person name="Ronning C.M."/>
            <person name="DeShazer D."/>
            <person name="Woods D."/>
            <person name="Fedorova N."/>
            <person name="Kim H.S."/>
            <person name="Shabalina S.A."/>
            <person name="Pearson T.R."/>
            <person name="Brinkac L."/>
            <person name="Tan P."/>
            <person name="Nandi T."/>
            <person name="Crabtree J."/>
            <person name="Badger J."/>
            <person name="Beckstrom-Sternberg S."/>
            <person name="Saqib M."/>
            <person name="Schutzer S.E."/>
            <person name="Keim P."/>
            <person name="Nierman W.C."/>
        </authorList>
    </citation>
    <scope>NUCLEOTIDE SEQUENCE [LARGE SCALE GENOMIC DNA]</scope>
    <source>
        <strain>SAVP1</strain>
    </source>
</reference>